<reference key="1">
    <citation type="submission" date="2007-06" db="EMBL/GenBank/DDBJ databases">
        <title>Complete sequence of Methanococcus aeolicus Nankai-3.</title>
        <authorList>
            <consortium name="US DOE Joint Genome Institute"/>
            <person name="Copeland A."/>
            <person name="Lucas S."/>
            <person name="Lapidus A."/>
            <person name="Barry K."/>
            <person name="Glavina del Rio T."/>
            <person name="Dalin E."/>
            <person name="Tice H."/>
            <person name="Pitluck S."/>
            <person name="Chain P."/>
            <person name="Malfatti S."/>
            <person name="Shin M."/>
            <person name="Vergez L."/>
            <person name="Schmutz J."/>
            <person name="Larimer F."/>
            <person name="Land M."/>
            <person name="Hauser L."/>
            <person name="Kyrpides N."/>
            <person name="Lykidis A."/>
            <person name="Sieprawska-Lupa M."/>
            <person name="Whitman W.B."/>
            <person name="Richardson P."/>
        </authorList>
    </citation>
    <scope>NUCLEOTIDE SEQUENCE [LARGE SCALE GENOMIC DNA]</scope>
    <source>
        <strain>ATCC BAA-1280 / DSM 17508 / OCM 812 / Nankai-3</strain>
    </source>
</reference>
<organism>
    <name type="scientific">Methanococcus aeolicus (strain ATCC BAA-1280 / DSM 17508 / OCM 812 / Nankai-3)</name>
    <dbReference type="NCBI Taxonomy" id="419665"/>
    <lineage>
        <taxon>Archaea</taxon>
        <taxon>Methanobacteriati</taxon>
        <taxon>Methanobacteriota</taxon>
        <taxon>Methanomada group</taxon>
        <taxon>Methanococci</taxon>
        <taxon>Methanococcales</taxon>
        <taxon>Methanococcaceae</taxon>
        <taxon>Methanococcus</taxon>
    </lineage>
</organism>
<sequence>MDFDSYADNYSKSISKKQCLELFEDNENLFNILNCANKINKKINGNTITYVVNRNINFTNICVGDCKFCAFKVDENHNDAYFINPKEIGKKAFEAKKLGCTEVCIQGGLRNNIDVELQSNILKEVCSATKPLGGIHIHAFSPMEVKFASENSGLDIKEALMILKENGLNTMPGTAAEILDDNIRAELCPSKLSTKEWIKIVKTAHKVGIKTTSTMMYGHIEEYKHIVNHLFILKEIQEETGGITEFVPLSFMHKMAPIYYEGNARGGSSGIEDLKVYAISRMLFGDTIKNIQVSWVKLGIKLAQMGLKCGANDFGGTLMEENISKSAGASYGTYMGAEEIRNVINAIGGAPRERDTFYNILE</sequence>
<protein>
    <recommendedName>
        <fullName evidence="1">5-amino-6-(D-ribitylamino)uracil--L-tyrosine 4-hydroxyphenyl transferase</fullName>
        <ecNumber evidence="1">2.5.1.147</ecNumber>
    </recommendedName>
    <alternativeName>
        <fullName evidence="1">FO synthase subunit 2</fullName>
    </alternativeName>
</protein>
<name>COFH_META3</name>
<comment type="function">
    <text evidence="1">Catalyzes the radical-mediated synthesis of 5-amino-5-(4-hydroxybenzyl)-6-(D-ribitylimino)-5,6-dihydrouracil from 5-amino-6-(D-ribitylamino)uracil and L-tyrosine.</text>
</comment>
<comment type="catalytic activity">
    <reaction evidence="1">
        <text>5-amino-6-(D-ribitylamino)uracil + L-tyrosine + S-adenosyl-L-methionine = 5-amino-5-(4-hydroxybenzyl)-6-(D-ribitylimino)-5,6-dihydrouracil + 2-iminoacetate + 5'-deoxyadenosine + L-methionine + H(+)</text>
        <dbReference type="Rhea" id="RHEA:55200"/>
        <dbReference type="ChEBI" id="CHEBI:15378"/>
        <dbReference type="ChEBI" id="CHEBI:15934"/>
        <dbReference type="ChEBI" id="CHEBI:17319"/>
        <dbReference type="ChEBI" id="CHEBI:57844"/>
        <dbReference type="ChEBI" id="CHEBI:58315"/>
        <dbReference type="ChEBI" id="CHEBI:59789"/>
        <dbReference type="ChEBI" id="CHEBI:77846"/>
        <dbReference type="ChEBI" id="CHEBI:85936"/>
        <dbReference type="EC" id="2.5.1.147"/>
    </reaction>
</comment>
<comment type="cofactor">
    <cofactor evidence="1">
        <name>[4Fe-4S] cluster</name>
        <dbReference type="ChEBI" id="CHEBI:49883"/>
    </cofactor>
    <text evidence="1">Binds 1 [4Fe-4S] cluster. The cluster is coordinated with 3 cysteines and an exchangeable S-adenosyl-L-methionine.</text>
</comment>
<comment type="pathway">
    <text evidence="1">Cofactor biosynthesis; coenzyme F0 biosynthesis.</text>
</comment>
<comment type="subunit">
    <text evidence="1">Consists of two subunits, CofG and CofH.</text>
</comment>
<comment type="similarity">
    <text evidence="1">Belongs to the radical SAM superfamily. CofH family.</text>
</comment>
<keyword id="KW-0004">4Fe-4S</keyword>
<keyword id="KW-0408">Iron</keyword>
<keyword id="KW-0411">Iron-sulfur</keyword>
<keyword id="KW-0479">Metal-binding</keyword>
<keyword id="KW-0949">S-adenosyl-L-methionine</keyword>
<keyword id="KW-0808">Transferase</keyword>
<evidence type="ECO:0000255" key="1">
    <source>
        <dbReference type="HAMAP-Rule" id="MF_01612"/>
    </source>
</evidence>
<evidence type="ECO:0000255" key="2">
    <source>
        <dbReference type="PROSITE-ProRule" id="PRU01266"/>
    </source>
</evidence>
<accession>A6UV11</accession>
<proteinExistence type="inferred from homology"/>
<gene>
    <name evidence="1" type="primary">cofH</name>
    <name type="ordered locus">Maeo_0750</name>
</gene>
<dbReference type="EC" id="2.5.1.147" evidence="1"/>
<dbReference type="EMBL" id="CP000743">
    <property type="protein sequence ID" value="ABR56333.1"/>
    <property type="molecule type" value="Genomic_DNA"/>
</dbReference>
<dbReference type="RefSeq" id="WP_011973465.1">
    <property type="nucleotide sequence ID" value="NC_009635.1"/>
</dbReference>
<dbReference type="SMR" id="A6UV11"/>
<dbReference type="STRING" id="419665.Maeo_0750"/>
<dbReference type="GeneID" id="5326302"/>
<dbReference type="KEGG" id="mae:Maeo_0750"/>
<dbReference type="eggNOG" id="arCOG00656">
    <property type="taxonomic scope" value="Archaea"/>
</dbReference>
<dbReference type="HOGENOM" id="CLU_040406_1_0_2"/>
<dbReference type="OrthoDB" id="8186at2157"/>
<dbReference type="UniPathway" id="UPA00072"/>
<dbReference type="Proteomes" id="UP000001106">
    <property type="component" value="Chromosome"/>
</dbReference>
<dbReference type="GO" id="GO:0051539">
    <property type="term" value="F:4 iron, 4 sulfur cluster binding"/>
    <property type="evidence" value="ECO:0007669"/>
    <property type="project" value="UniProtKB-KW"/>
</dbReference>
<dbReference type="GO" id="GO:0141093">
    <property type="term" value="F:5-amino-6-(D-ribitylamino)uracil--L-tyrosine 4-hydroxyphenyl transferase activity"/>
    <property type="evidence" value="ECO:0007669"/>
    <property type="project" value="UniProtKB-EC"/>
</dbReference>
<dbReference type="GO" id="GO:0044689">
    <property type="term" value="F:7,8-didemethyl-8-hydroxy-5-deazariboflavin synthase activity"/>
    <property type="evidence" value="ECO:0007669"/>
    <property type="project" value="TreeGrafter"/>
</dbReference>
<dbReference type="GO" id="GO:0005506">
    <property type="term" value="F:iron ion binding"/>
    <property type="evidence" value="ECO:0007669"/>
    <property type="project" value="UniProtKB-UniRule"/>
</dbReference>
<dbReference type="CDD" id="cd01335">
    <property type="entry name" value="Radical_SAM"/>
    <property type="match status" value="1"/>
</dbReference>
<dbReference type="FunFam" id="3.20.20.70:FF:000134">
    <property type="entry name" value="7,8-didemethyl-8-hydroxy-5-deazariboflavin synthase"/>
    <property type="match status" value="1"/>
</dbReference>
<dbReference type="Gene3D" id="3.20.20.70">
    <property type="entry name" value="Aldolase class I"/>
    <property type="match status" value="1"/>
</dbReference>
<dbReference type="HAMAP" id="MF_01612">
    <property type="entry name" value="FO_synth_sub2"/>
    <property type="match status" value="1"/>
</dbReference>
<dbReference type="InterPro" id="IPR013785">
    <property type="entry name" value="Aldolase_TIM"/>
</dbReference>
<dbReference type="InterPro" id="IPR045567">
    <property type="entry name" value="CofH/MnqC-like_C"/>
</dbReference>
<dbReference type="InterPro" id="IPR019940">
    <property type="entry name" value="CofH_family"/>
</dbReference>
<dbReference type="InterPro" id="IPR006638">
    <property type="entry name" value="Elp3/MiaA/NifB-like_rSAM"/>
</dbReference>
<dbReference type="InterPro" id="IPR034405">
    <property type="entry name" value="F420"/>
</dbReference>
<dbReference type="InterPro" id="IPR020050">
    <property type="entry name" value="FO_synthase_su2"/>
</dbReference>
<dbReference type="InterPro" id="IPR007197">
    <property type="entry name" value="rSAM"/>
</dbReference>
<dbReference type="NCBIfam" id="TIGR00423">
    <property type="entry name" value="CofH family radical SAM protein"/>
    <property type="match status" value="1"/>
</dbReference>
<dbReference type="NCBIfam" id="TIGR03551">
    <property type="entry name" value="F420_cofH"/>
    <property type="match status" value="1"/>
</dbReference>
<dbReference type="NCBIfam" id="NF005609">
    <property type="entry name" value="PRK07360.1"/>
    <property type="match status" value="1"/>
</dbReference>
<dbReference type="PANTHER" id="PTHR43076">
    <property type="entry name" value="FO SYNTHASE (COFH)"/>
    <property type="match status" value="1"/>
</dbReference>
<dbReference type="PANTHER" id="PTHR43076:SF1">
    <property type="entry name" value="LIPOYL SYNTHASE 2"/>
    <property type="match status" value="1"/>
</dbReference>
<dbReference type="Pfam" id="PF19288">
    <property type="entry name" value="CofH_C"/>
    <property type="match status" value="1"/>
</dbReference>
<dbReference type="Pfam" id="PF04055">
    <property type="entry name" value="Radical_SAM"/>
    <property type="match status" value="1"/>
</dbReference>
<dbReference type="PIRSF" id="PIRSF004762">
    <property type="entry name" value="CHP00423"/>
    <property type="match status" value="1"/>
</dbReference>
<dbReference type="SFLD" id="SFLDF00293">
    <property type="entry name" value="((2_3_4_5-tetrahydroxypentyl)a"/>
    <property type="match status" value="1"/>
</dbReference>
<dbReference type="SFLD" id="SFLDG01388">
    <property type="entry name" value="7_8-didemethyl-8-hydroxy-5-dea"/>
    <property type="match status" value="1"/>
</dbReference>
<dbReference type="SFLD" id="SFLDF00343">
    <property type="entry name" value="aminofutalosine_synthase_(mqnE"/>
    <property type="match status" value="1"/>
</dbReference>
<dbReference type="SMART" id="SM00729">
    <property type="entry name" value="Elp3"/>
    <property type="match status" value="1"/>
</dbReference>
<dbReference type="SUPFAM" id="SSF102114">
    <property type="entry name" value="Radical SAM enzymes"/>
    <property type="match status" value="1"/>
</dbReference>
<dbReference type="PROSITE" id="PS51918">
    <property type="entry name" value="RADICAL_SAM"/>
    <property type="match status" value="1"/>
</dbReference>
<feature type="chain" id="PRO_0000323515" description="5-amino-6-(D-ribitylamino)uracil--L-tyrosine 4-hydroxyphenyl transferase">
    <location>
        <begin position="1"/>
        <end position="362"/>
    </location>
</feature>
<feature type="domain" description="Radical SAM core" evidence="2">
    <location>
        <begin position="48"/>
        <end position="294"/>
    </location>
</feature>
<feature type="binding site" evidence="1">
    <location>
        <position position="62"/>
    </location>
    <ligand>
        <name>[4Fe-4S] cluster</name>
        <dbReference type="ChEBI" id="CHEBI:49883"/>
        <note>4Fe-4S-S-AdoMet</note>
    </ligand>
</feature>
<feature type="binding site" evidence="1">
    <location>
        <position position="66"/>
    </location>
    <ligand>
        <name>[4Fe-4S] cluster</name>
        <dbReference type="ChEBI" id="CHEBI:49883"/>
        <note>4Fe-4S-S-AdoMet</note>
    </ligand>
</feature>
<feature type="binding site" evidence="1">
    <location>
        <position position="69"/>
    </location>
    <ligand>
        <name>[4Fe-4S] cluster</name>
        <dbReference type="ChEBI" id="CHEBI:49883"/>
        <note>4Fe-4S-S-AdoMet</note>
    </ligand>
</feature>